<sequence>MKFTLVGNGRMGREVAAVISRSGIHETAAVLDVDAKITPDSFRGSDAIIDFTVRDAFLQNLDAMLASGVPVVAGTTGWDDVRAGVASKVKAAGGSLLYSANFSLGVNIFLRTVREASRLIAPFEQFDIAFSEQHHTAKADFPSGTALAAAEHILAANSRKHSIVRQLPDGRKIQPDELQVAAIRLGGVFGKHTAFIDSEADEIVISHTAKNRSGFASGAVETAAWLALRHKTAPGFYTMDDFLNERLA</sequence>
<name>DAPB_CHLL3</name>
<reference key="1">
    <citation type="submission" date="2005-08" db="EMBL/GenBank/DDBJ databases">
        <title>Complete sequence of Pelodictyon luteolum DSM 273.</title>
        <authorList>
            <consortium name="US DOE Joint Genome Institute"/>
            <person name="Copeland A."/>
            <person name="Lucas S."/>
            <person name="Lapidus A."/>
            <person name="Barry K."/>
            <person name="Detter J.C."/>
            <person name="Glavina T."/>
            <person name="Hammon N."/>
            <person name="Israni S."/>
            <person name="Pitluck S."/>
            <person name="Bryant D."/>
            <person name="Schmutz J."/>
            <person name="Larimer F."/>
            <person name="Land M."/>
            <person name="Kyrpides N."/>
            <person name="Ivanova N."/>
            <person name="Richardson P."/>
        </authorList>
    </citation>
    <scope>NUCLEOTIDE SEQUENCE [LARGE SCALE GENOMIC DNA]</scope>
    <source>
        <strain>DSM 273 / BCRC 81028 / 2530</strain>
    </source>
</reference>
<keyword id="KW-0028">Amino-acid biosynthesis</keyword>
<keyword id="KW-0963">Cytoplasm</keyword>
<keyword id="KW-0220">Diaminopimelate biosynthesis</keyword>
<keyword id="KW-0457">Lysine biosynthesis</keyword>
<keyword id="KW-0520">NAD</keyword>
<keyword id="KW-0521">NADP</keyword>
<keyword id="KW-0560">Oxidoreductase</keyword>
<keyword id="KW-1185">Reference proteome</keyword>
<accession>Q3B619</accession>
<proteinExistence type="inferred from homology"/>
<gene>
    <name evidence="1" type="primary">dapB</name>
    <name type="ordered locus">Plut_0324</name>
</gene>
<feature type="chain" id="PRO_1000093985" description="4-hydroxy-tetrahydrodipicolinate reductase">
    <location>
        <begin position="1"/>
        <end position="248"/>
    </location>
</feature>
<feature type="active site" description="Proton donor/acceptor" evidence="1">
    <location>
        <position position="134"/>
    </location>
</feature>
<feature type="active site" description="Proton donor" evidence="1">
    <location>
        <position position="138"/>
    </location>
</feature>
<feature type="binding site" evidence="1">
    <location>
        <position position="32"/>
    </location>
    <ligand>
        <name>NAD(+)</name>
        <dbReference type="ChEBI" id="CHEBI:57540"/>
    </ligand>
</feature>
<feature type="binding site" evidence="1">
    <location>
        <begin position="74"/>
        <end position="76"/>
    </location>
    <ligand>
        <name>NAD(+)</name>
        <dbReference type="ChEBI" id="CHEBI:57540"/>
    </ligand>
</feature>
<feature type="binding site" evidence="1">
    <location>
        <begin position="99"/>
        <end position="102"/>
    </location>
    <ligand>
        <name>NAD(+)</name>
        <dbReference type="ChEBI" id="CHEBI:57540"/>
    </ligand>
</feature>
<feature type="binding site" evidence="1">
    <location>
        <position position="135"/>
    </location>
    <ligand>
        <name>(S)-2,3,4,5-tetrahydrodipicolinate</name>
        <dbReference type="ChEBI" id="CHEBI:16845"/>
    </ligand>
</feature>
<feature type="binding site" evidence="1">
    <location>
        <begin position="144"/>
        <end position="145"/>
    </location>
    <ligand>
        <name>(S)-2,3,4,5-tetrahydrodipicolinate</name>
        <dbReference type="ChEBI" id="CHEBI:16845"/>
    </ligand>
</feature>
<protein>
    <recommendedName>
        <fullName evidence="1">4-hydroxy-tetrahydrodipicolinate reductase</fullName>
        <shortName evidence="1">HTPA reductase</shortName>
        <ecNumber evidence="1">1.17.1.8</ecNumber>
    </recommendedName>
</protein>
<comment type="function">
    <text evidence="1">Catalyzes the conversion of 4-hydroxy-tetrahydrodipicolinate (HTPA) to tetrahydrodipicolinate.</text>
</comment>
<comment type="catalytic activity">
    <reaction evidence="1">
        <text>(S)-2,3,4,5-tetrahydrodipicolinate + NAD(+) + H2O = (2S,4S)-4-hydroxy-2,3,4,5-tetrahydrodipicolinate + NADH + H(+)</text>
        <dbReference type="Rhea" id="RHEA:35323"/>
        <dbReference type="ChEBI" id="CHEBI:15377"/>
        <dbReference type="ChEBI" id="CHEBI:15378"/>
        <dbReference type="ChEBI" id="CHEBI:16845"/>
        <dbReference type="ChEBI" id="CHEBI:57540"/>
        <dbReference type="ChEBI" id="CHEBI:57945"/>
        <dbReference type="ChEBI" id="CHEBI:67139"/>
        <dbReference type="EC" id="1.17.1.8"/>
    </reaction>
</comment>
<comment type="catalytic activity">
    <reaction evidence="1">
        <text>(S)-2,3,4,5-tetrahydrodipicolinate + NADP(+) + H2O = (2S,4S)-4-hydroxy-2,3,4,5-tetrahydrodipicolinate + NADPH + H(+)</text>
        <dbReference type="Rhea" id="RHEA:35331"/>
        <dbReference type="ChEBI" id="CHEBI:15377"/>
        <dbReference type="ChEBI" id="CHEBI:15378"/>
        <dbReference type="ChEBI" id="CHEBI:16845"/>
        <dbReference type="ChEBI" id="CHEBI:57783"/>
        <dbReference type="ChEBI" id="CHEBI:58349"/>
        <dbReference type="ChEBI" id="CHEBI:67139"/>
        <dbReference type="EC" id="1.17.1.8"/>
    </reaction>
</comment>
<comment type="pathway">
    <text evidence="1">Amino-acid biosynthesis; L-lysine biosynthesis via DAP pathway; (S)-tetrahydrodipicolinate from L-aspartate: step 4/4.</text>
</comment>
<comment type="subcellular location">
    <subcellularLocation>
        <location evidence="1">Cytoplasm</location>
    </subcellularLocation>
</comment>
<comment type="similarity">
    <text evidence="1">Belongs to the DapB family.</text>
</comment>
<comment type="caution">
    <text evidence="2">Was originally thought to be a dihydrodipicolinate reductase (DHDPR), catalyzing the conversion of dihydrodipicolinate to tetrahydrodipicolinate. However, it was shown in E.coli that the substrate of the enzymatic reaction is not dihydrodipicolinate (DHDP) but in fact (2S,4S)-4-hydroxy-2,3,4,5-tetrahydrodipicolinic acid (HTPA), the product released by the DapA-catalyzed reaction.</text>
</comment>
<dbReference type="EC" id="1.17.1.8" evidence="1"/>
<dbReference type="EMBL" id="CP000096">
    <property type="protein sequence ID" value="ABB23212.1"/>
    <property type="molecule type" value="Genomic_DNA"/>
</dbReference>
<dbReference type="RefSeq" id="WP_011357087.1">
    <property type="nucleotide sequence ID" value="NC_007512.1"/>
</dbReference>
<dbReference type="SMR" id="Q3B619"/>
<dbReference type="STRING" id="319225.Plut_0324"/>
<dbReference type="KEGG" id="plt:Plut_0324"/>
<dbReference type="eggNOG" id="COG0289">
    <property type="taxonomic scope" value="Bacteria"/>
</dbReference>
<dbReference type="HOGENOM" id="CLU_047479_1_0_10"/>
<dbReference type="OrthoDB" id="9790352at2"/>
<dbReference type="UniPathway" id="UPA00034">
    <property type="reaction ID" value="UER00018"/>
</dbReference>
<dbReference type="Proteomes" id="UP000002709">
    <property type="component" value="Chromosome"/>
</dbReference>
<dbReference type="GO" id="GO:0005829">
    <property type="term" value="C:cytosol"/>
    <property type="evidence" value="ECO:0007669"/>
    <property type="project" value="TreeGrafter"/>
</dbReference>
<dbReference type="GO" id="GO:0008839">
    <property type="term" value="F:4-hydroxy-tetrahydrodipicolinate reductase"/>
    <property type="evidence" value="ECO:0007669"/>
    <property type="project" value="UniProtKB-EC"/>
</dbReference>
<dbReference type="GO" id="GO:0051287">
    <property type="term" value="F:NAD binding"/>
    <property type="evidence" value="ECO:0007669"/>
    <property type="project" value="UniProtKB-UniRule"/>
</dbReference>
<dbReference type="GO" id="GO:0050661">
    <property type="term" value="F:NADP binding"/>
    <property type="evidence" value="ECO:0007669"/>
    <property type="project" value="UniProtKB-UniRule"/>
</dbReference>
<dbReference type="GO" id="GO:0016726">
    <property type="term" value="F:oxidoreductase activity, acting on CH or CH2 groups, NAD or NADP as acceptor"/>
    <property type="evidence" value="ECO:0007669"/>
    <property type="project" value="UniProtKB-UniRule"/>
</dbReference>
<dbReference type="GO" id="GO:0019877">
    <property type="term" value="P:diaminopimelate biosynthetic process"/>
    <property type="evidence" value="ECO:0007669"/>
    <property type="project" value="UniProtKB-UniRule"/>
</dbReference>
<dbReference type="GO" id="GO:0009089">
    <property type="term" value="P:lysine biosynthetic process via diaminopimelate"/>
    <property type="evidence" value="ECO:0007669"/>
    <property type="project" value="UniProtKB-UniRule"/>
</dbReference>
<dbReference type="Gene3D" id="3.30.360.10">
    <property type="entry name" value="Dihydrodipicolinate Reductase, domain 2"/>
    <property type="match status" value="1"/>
</dbReference>
<dbReference type="Gene3D" id="3.40.50.720">
    <property type="entry name" value="NAD(P)-binding Rossmann-like Domain"/>
    <property type="match status" value="1"/>
</dbReference>
<dbReference type="HAMAP" id="MF_00102">
    <property type="entry name" value="DapB"/>
    <property type="match status" value="1"/>
</dbReference>
<dbReference type="InterPro" id="IPR022663">
    <property type="entry name" value="DapB_C"/>
</dbReference>
<dbReference type="InterPro" id="IPR000846">
    <property type="entry name" value="DapB_N"/>
</dbReference>
<dbReference type="InterPro" id="IPR023940">
    <property type="entry name" value="DHDPR_bac"/>
</dbReference>
<dbReference type="InterPro" id="IPR036291">
    <property type="entry name" value="NAD(P)-bd_dom_sf"/>
</dbReference>
<dbReference type="NCBIfam" id="TIGR00036">
    <property type="entry name" value="dapB"/>
    <property type="match status" value="1"/>
</dbReference>
<dbReference type="PANTHER" id="PTHR20836:SF0">
    <property type="entry name" value="4-HYDROXY-TETRAHYDRODIPICOLINATE REDUCTASE 1, CHLOROPLASTIC-RELATED"/>
    <property type="match status" value="1"/>
</dbReference>
<dbReference type="PANTHER" id="PTHR20836">
    <property type="entry name" value="DIHYDRODIPICOLINATE REDUCTASE"/>
    <property type="match status" value="1"/>
</dbReference>
<dbReference type="Pfam" id="PF05173">
    <property type="entry name" value="DapB_C"/>
    <property type="match status" value="1"/>
</dbReference>
<dbReference type="Pfam" id="PF01113">
    <property type="entry name" value="DapB_N"/>
    <property type="match status" value="1"/>
</dbReference>
<dbReference type="PIRSF" id="PIRSF000161">
    <property type="entry name" value="DHPR"/>
    <property type="match status" value="1"/>
</dbReference>
<dbReference type="SUPFAM" id="SSF55347">
    <property type="entry name" value="Glyceraldehyde-3-phosphate dehydrogenase-like, C-terminal domain"/>
    <property type="match status" value="1"/>
</dbReference>
<dbReference type="SUPFAM" id="SSF51735">
    <property type="entry name" value="NAD(P)-binding Rossmann-fold domains"/>
    <property type="match status" value="1"/>
</dbReference>
<organism>
    <name type="scientific">Chlorobium luteolum (strain DSM 273 / BCRC 81028 / 2530)</name>
    <name type="common">Pelodictyon luteolum</name>
    <dbReference type="NCBI Taxonomy" id="319225"/>
    <lineage>
        <taxon>Bacteria</taxon>
        <taxon>Pseudomonadati</taxon>
        <taxon>Chlorobiota</taxon>
        <taxon>Chlorobiia</taxon>
        <taxon>Chlorobiales</taxon>
        <taxon>Chlorobiaceae</taxon>
        <taxon>Chlorobium/Pelodictyon group</taxon>
        <taxon>Pelodictyon</taxon>
    </lineage>
</organism>
<evidence type="ECO:0000255" key="1">
    <source>
        <dbReference type="HAMAP-Rule" id="MF_00102"/>
    </source>
</evidence>
<evidence type="ECO:0000305" key="2"/>